<organism>
    <name type="scientific">Actinia equina</name>
    <name type="common">Beadlet anemone</name>
    <dbReference type="NCBI Taxonomy" id="6106"/>
    <lineage>
        <taxon>Eukaryota</taxon>
        <taxon>Metazoa</taxon>
        <taxon>Cnidaria</taxon>
        <taxon>Anthozoa</taxon>
        <taxon>Hexacorallia</taxon>
        <taxon>Actiniaria</taxon>
        <taxon>Actiniidae</taxon>
        <taxon>Actinia</taxon>
    </lineage>
</organism>
<sequence length="83" mass="9068">MIYKAVFVCLVLVLLGDVFCSPRNSGGGTLNDNPFEKRTDCRFVGAKCTKANNPCVGKVCNGYQLYCPADDDHCIMKLTFIPG</sequence>
<name>ACR2_ACTEQ</name>
<reference key="1">
    <citation type="journal article" date="2005" name="Toxicon">
        <title>Novel peptide toxins from acrorhagi, aggressive organs of the sea anemone Actinia equina.</title>
        <authorList>
            <person name="Honma T."/>
            <person name="Minagawa S."/>
            <person name="Nagai H."/>
            <person name="Ishida M."/>
            <person name="Nagashima Y."/>
            <person name="Shiomi K."/>
        </authorList>
    </citation>
    <scope>NUCLEOTIDE SEQUENCE [MRNA]</scope>
    <scope>PROTEIN SEQUENCE OF 39-78</scope>
    <scope>MASS SPECTROMETRY</scope>
    <scope>AMIDATION AT PRO-82</scope>
    <scope>TOXIC DOSE</scope>
    <scope>TISSUE SPECIFICITY</scope>
    <scope>FUNCTION</scope>
</reference>
<reference key="2">
    <citation type="journal article" date="2012" name="Toxicon">
        <title>Development of a rational nomenclature for naming peptide and protein toxins from sea anemones.</title>
        <authorList>
            <person name="Oliveira J.S."/>
            <person name="Fuentes-Silva D."/>
            <person name="King G.F."/>
        </authorList>
    </citation>
    <scope>NOMENCLATURE</scope>
</reference>
<dbReference type="EMBL" id="AB212068">
    <property type="protein sequence ID" value="BAE46983.1"/>
    <property type="molecule type" value="mRNA"/>
</dbReference>
<dbReference type="GO" id="GO:0005576">
    <property type="term" value="C:extracellular region"/>
    <property type="evidence" value="ECO:0007669"/>
    <property type="project" value="UniProtKB-SubCell"/>
</dbReference>
<dbReference type="GO" id="GO:0042151">
    <property type="term" value="C:nematocyst"/>
    <property type="evidence" value="ECO:0007669"/>
    <property type="project" value="UniProtKB-SubCell"/>
</dbReference>
<dbReference type="GO" id="GO:0090729">
    <property type="term" value="F:toxin activity"/>
    <property type="evidence" value="ECO:0007669"/>
    <property type="project" value="UniProtKB-KW"/>
</dbReference>
<feature type="signal peptide" evidence="1">
    <location>
        <begin position="1"/>
        <end position="20"/>
    </location>
</feature>
<feature type="propeptide" id="PRO_0000228113" evidence="2">
    <location>
        <begin position="21"/>
        <end position="36"/>
    </location>
</feature>
<feature type="chain" id="PRO_0000228114" description="U-actitoxin-Aeq6a">
    <location>
        <begin position="39"/>
        <end position="82"/>
    </location>
</feature>
<feature type="modified residue" description="Proline amide" evidence="6">
    <location>
        <position position="82"/>
    </location>
</feature>
<accession>Q3C256</accession>
<protein>
    <recommendedName>
        <fullName evidence="4">U-actitoxin-Aeq6a</fullName>
        <shortName evidence="4">U-AITX-Aeq6a</shortName>
    </recommendedName>
    <alternativeName>
        <fullName evidence="3">Acrorhagin II</fullName>
    </alternativeName>
    <alternativeName>
        <fullName evidence="5">Acrorhagin-2</fullName>
    </alternativeName>
</protein>
<comment type="function">
    <text evidence="2">Toxin.</text>
</comment>
<comment type="subcellular location">
    <subcellularLocation>
        <location evidence="5">Secreted</location>
    </subcellularLocation>
    <subcellularLocation>
        <location evidence="5">Nematocyst</location>
    </subcellularLocation>
</comment>
<comment type="tissue specificity">
    <text evidence="2">Expressed by acrorhagi.</text>
</comment>
<comment type="PTM">
    <text evidence="5">Contains 3 disulfide bonds.</text>
</comment>
<comment type="mass spectrometry" mass="4873.0" method="MALDI" evidence="2"/>
<comment type="toxic dose">
    <text evidence="2">LD(50) is 80 ug/kg against crab (P.dehaani).</text>
</comment>
<evidence type="ECO:0000255" key="1"/>
<evidence type="ECO:0000269" key="2">
    <source>
    </source>
</evidence>
<evidence type="ECO:0000303" key="3">
    <source>
    </source>
</evidence>
<evidence type="ECO:0000303" key="4">
    <source>
    </source>
</evidence>
<evidence type="ECO:0000305" key="5"/>
<evidence type="ECO:0000305" key="6">
    <source>
    </source>
</evidence>
<proteinExistence type="evidence at protein level"/>
<keyword id="KW-0027">Amidation</keyword>
<keyword id="KW-0165">Cleavage on pair of basic residues</keyword>
<keyword id="KW-0903">Direct protein sequencing</keyword>
<keyword id="KW-1015">Disulfide bond</keyword>
<keyword id="KW-0166">Nematocyst</keyword>
<keyword id="KW-0964">Secreted</keyword>
<keyword id="KW-0732">Signal</keyword>
<keyword id="KW-0800">Toxin</keyword>